<protein>
    <recommendedName>
        <fullName>U1-lycotoxin-Ls1b</fullName>
    </recommendedName>
    <alternativeName>
        <fullName>Toxin-like structure LSTX-A1</fullName>
    </alternativeName>
    <alternativeName>
        <fullName>Toxin-like structure LSTX-A18</fullName>
    </alternativeName>
    <alternativeName>
        <fullName>Toxin-like structure LSTX-A3</fullName>
    </alternativeName>
</protein>
<sequence>MMKVLVVVALLVTLISYSSSEGIDDLEADELLSLMANEQTRKECIPKHHECTSNKHGCCRGNFFKYKCQCTTVVTQDGEQTERCFCGTPPHHKAAELVVGFGKKIFG</sequence>
<organism>
    <name type="scientific">Lycosa singoriensis</name>
    <name type="common">Wolf spider</name>
    <name type="synonym">Aranea singoriensis</name>
    <dbReference type="NCBI Taxonomy" id="434756"/>
    <lineage>
        <taxon>Eukaryota</taxon>
        <taxon>Metazoa</taxon>
        <taxon>Ecdysozoa</taxon>
        <taxon>Arthropoda</taxon>
        <taxon>Chelicerata</taxon>
        <taxon>Arachnida</taxon>
        <taxon>Araneae</taxon>
        <taxon>Araneomorphae</taxon>
        <taxon>Entelegynae</taxon>
        <taxon>Lycosoidea</taxon>
        <taxon>Lycosidae</taxon>
        <taxon>Lycosa</taxon>
    </lineage>
</organism>
<comment type="subcellular location">
    <subcellularLocation>
        <location evidence="1">Secreted</location>
    </subcellularLocation>
</comment>
<comment type="tissue specificity">
    <text>Expressed by the venom gland.</text>
</comment>
<comment type="domain">
    <text evidence="1">The presence of a 'disulfide through disulfide knot' structurally defines this protein as a knottin.</text>
</comment>
<comment type="similarity">
    <text evidence="3">Belongs to the neurotoxin 19 (CSTX) family. 04 (U1-Lctx) subfamily.</text>
</comment>
<comment type="sequence caution" evidence="3">
    <conflict type="frameshift">
        <sequence resource="EMBL-CDS" id="ACI41258"/>
    </conflict>
</comment>
<name>TX101_LYCSI</name>
<proteinExistence type="evidence at transcript level"/>
<reference key="1">
    <citation type="journal article" date="2010" name="Zoology">
        <title>Transcriptome analysis of the venom glands of the Chinese wolf spider Lycosa singoriensis.</title>
        <authorList>
            <person name="Zhang Y."/>
            <person name="Chen J."/>
            <person name="Tang X."/>
            <person name="Wang F."/>
            <person name="Jiang L."/>
            <person name="Xiong X."/>
            <person name="Wang M."/>
            <person name="Rong M."/>
            <person name="Liu Z."/>
            <person name="Liang S."/>
        </authorList>
    </citation>
    <scope>NUCLEOTIDE SEQUENCE [LARGE SCALE MRNA]</scope>
    <source>
        <tissue>Venom gland</tissue>
    </source>
</reference>
<feature type="signal peptide" evidence="2">
    <location>
        <begin position="1"/>
        <end position="20"/>
    </location>
</feature>
<feature type="propeptide" id="PRO_0000401503" evidence="1">
    <location>
        <begin position="21"/>
        <end position="41"/>
    </location>
</feature>
<feature type="chain" id="PRO_0000401504" description="U1-lycotoxin-Ls1b">
    <location>
        <begin position="42"/>
        <end position="107"/>
    </location>
</feature>
<feature type="disulfide bond" evidence="1">
    <location>
        <begin position="44"/>
        <end position="59"/>
    </location>
</feature>
<feature type="disulfide bond" evidence="1">
    <location>
        <begin position="51"/>
        <end position="68"/>
    </location>
</feature>
<feature type="disulfide bond" evidence="1">
    <location>
        <begin position="58"/>
        <end position="86"/>
    </location>
</feature>
<feature type="disulfide bond" evidence="1">
    <location>
        <begin position="70"/>
        <end position="84"/>
    </location>
</feature>
<keyword id="KW-1015">Disulfide bond</keyword>
<keyword id="KW-0960">Knottin</keyword>
<keyword id="KW-0964">Secreted</keyword>
<keyword id="KW-0732">Signal</keyword>
<keyword id="KW-0800">Toxin</keyword>
<dbReference type="EMBL" id="EU925924">
    <property type="protein sequence ID" value="ACI41256.1"/>
    <property type="molecule type" value="mRNA"/>
</dbReference>
<dbReference type="EMBL" id="EU925941">
    <property type="protein sequence ID" value="ACI41273.1"/>
    <property type="molecule type" value="mRNA"/>
</dbReference>
<dbReference type="EMBL" id="EU925926">
    <property type="protein sequence ID" value="ACI41258.1"/>
    <property type="status" value="ALT_FRAME"/>
    <property type="molecule type" value="mRNA"/>
</dbReference>
<dbReference type="EMBL" id="FM863928">
    <property type="protein sequence ID" value="CAS03529.1"/>
    <property type="molecule type" value="mRNA"/>
</dbReference>
<dbReference type="EMBL" id="FM863945">
    <property type="protein sequence ID" value="CAS03543.1"/>
    <property type="molecule type" value="mRNA"/>
</dbReference>
<dbReference type="SMR" id="B6DCJ0"/>
<dbReference type="ArachnoServer" id="AS000884">
    <property type="toxin name" value="U1-lycotoxin-Ls1b"/>
</dbReference>
<dbReference type="GO" id="GO:0005576">
    <property type="term" value="C:extracellular region"/>
    <property type="evidence" value="ECO:0007669"/>
    <property type="project" value="UniProtKB-SubCell"/>
</dbReference>
<dbReference type="GO" id="GO:0090729">
    <property type="term" value="F:toxin activity"/>
    <property type="evidence" value="ECO:0007669"/>
    <property type="project" value="UniProtKB-KW"/>
</dbReference>
<dbReference type="InterPro" id="IPR019553">
    <property type="entry name" value="Spider_toxin_CSTX_knottin"/>
</dbReference>
<dbReference type="InterPro" id="IPR011142">
    <property type="entry name" value="Spider_toxin_CSTX_Knottin_CS"/>
</dbReference>
<dbReference type="Pfam" id="PF10530">
    <property type="entry name" value="Toxin_35"/>
    <property type="match status" value="1"/>
</dbReference>
<dbReference type="PROSITE" id="PS60029">
    <property type="entry name" value="SPIDER_CSTX"/>
    <property type="match status" value="1"/>
</dbReference>
<accession>B6DCJ0</accession>
<accession>B6DCJ2</accession>
<evidence type="ECO:0000250" key="1"/>
<evidence type="ECO:0000255" key="2"/>
<evidence type="ECO:0000305" key="3"/>